<evidence type="ECO:0000305" key="1"/>
<feature type="chain" id="PRO_0000120572" description="Protein HesA, vegetative">
    <location>
        <begin position="1"/>
        <end position="265"/>
    </location>
</feature>
<reference key="1">
    <citation type="journal article" date="1995" name="Mol. Microbiol.">
        <title>Distinct and differently regulated Mo-dependent nitrogen-fixing systems evolved for heterocysts and vegetative cells of Anabaena variabilis ATCC 29413: characterization of the fdxH1/2 gene regions as part of the nif1/2 gene clusters.</title>
        <authorList>
            <person name="Schrautemeier B."/>
            <person name="Neveling U."/>
            <person name="Schmitz S."/>
        </authorList>
    </citation>
    <scope>NUCLEOTIDE SEQUENCE [GENOMIC DNA]</scope>
</reference>
<reference key="2">
    <citation type="journal article" date="2014" name="Stand. Genomic Sci.">
        <title>Complete genome sequence of Anabaena variabilis ATCC 29413.</title>
        <authorList>
            <person name="Thiel T."/>
            <person name="Pratte B.S."/>
            <person name="Zhong J."/>
            <person name="Goodwin L."/>
            <person name="Copeland A."/>
            <person name="Lucas S."/>
            <person name="Han C."/>
            <person name="Pitluck S."/>
            <person name="Land M.L."/>
            <person name="Kyrpides N.C."/>
            <person name="Woyke T."/>
        </authorList>
    </citation>
    <scope>NUCLEOTIDE SEQUENCE [LARGE SCALE GENOMIC DNA]</scope>
    <source>
        <strain>ATCC 29413 / PCC 7937</strain>
    </source>
</reference>
<dbReference type="EMBL" id="Z46890">
    <property type="protein sequence ID" value="CAA86989.1"/>
    <property type="molecule type" value="Genomic_DNA"/>
</dbReference>
<dbReference type="EMBL" id="CP000117">
    <property type="protein sequence ID" value="ABA23855.1"/>
    <property type="molecule type" value="Genomic_DNA"/>
</dbReference>
<dbReference type="PIR" id="S70247">
    <property type="entry name" value="S70247"/>
</dbReference>
<dbReference type="SMR" id="P46048"/>
<dbReference type="STRING" id="240292.Ava_4256"/>
<dbReference type="KEGG" id="ava:Ava_4256"/>
<dbReference type="eggNOG" id="COG0476">
    <property type="taxonomic scope" value="Bacteria"/>
</dbReference>
<dbReference type="HOGENOM" id="CLU_013325_10_0_3"/>
<dbReference type="Proteomes" id="UP000002533">
    <property type="component" value="Chromosome"/>
</dbReference>
<dbReference type="GO" id="GO:0005737">
    <property type="term" value="C:cytoplasm"/>
    <property type="evidence" value="ECO:0007669"/>
    <property type="project" value="TreeGrafter"/>
</dbReference>
<dbReference type="GO" id="GO:0016779">
    <property type="term" value="F:nucleotidyltransferase activity"/>
    <property type="evidence" value="ECO:0007669"/>
    <property type="project" value="TreeGrafter"/>
</dbReference>
<dbReference type="GO" id="GO:0004792">
    <property type="term" value="F:thiosulfate-cyanide sulfurtransferase activity"/>
    <property type="evidence" value="ECO:0007669"/>
    <property type="project" value="TreeGrafter"/>
</dbReference>
<dbReference type="GO" id="GO:0008641">
    <property type="term" value="F:ubiquitin-like modifier activating enzyme activity"/>
    <property type="evidence" value="ECO:0007669"/>
    <property type="project" value="InterPro"/>
</dbReference>
<dbReference type="GO" id="GO:0009399">
    <property type="term" value="P:nitrogen fixation"/>
    <property type="evidence" value="ECO:0007669"/>
    <property type="project" value="UniProtKB-KW"/>
</dbReference>
<dbReference type="CDD" id="cd00757">
    <property type="entry name" value="ThiF_MoeB_HesA_family"/>
    <property type="match status" value="1"/>
</dbReference>
<dbReference type="Gene3D" id="3.40.50.720">
    <property type="entry name" value="NAD(P)-binding Rossmann-like Domain"/>
    <property type="match status" value="1"/>
</dbReference>
<dbReference type="InterPro" id="IPR045886">
    <property type="entry name" value="ThiF/MoeB/HesA"/>
</dbReference>
<dbReference type="InterPro" id="IPR000594">
    <property type="entry name" value="ThiF_NAD_FAD-bd"/>
</dbReference>
<dbReference type="InterPro" id="IPR035985">
    <property type="entry name" value="Ubiquitin-activating_enz"/>
</dbReference>
<dbReference type="PANTHER" id="PTHR10953:SF102">
    <property type="entry name" value="ADENYLYLTRANSFERASE AND SULFURTRANSFERASE MOCS3"/>
    <property type="match status" value="1"/>
</dbReference>
<dbReference type="PANTHER" id="PTHR10953">
    <property type="entry name" value="UBIQUITIN-ACTIVATING ENZYME E1"/>
    <property type="match status" value="1"/>
</dbReference>
<dbReference type="Pfam" id="PF00899">
    <property type="entry name" value="ThiF"/>
    <property type="match status" value="1"/>
</dbReference>
<dbReference type="SUPFAM" id="SSF69572">
    <property type="entry name" value="Activating enzymes of the ubiquitin-like proteins"/>
    <property type="match status" value="1"/>
</dbReference>
<name>HESA2_TRIV2</name>
<protein>
    <recommendedName>
        <fullName>Protein HesA, vegetative</fullName>
    </recommendedName>
</protein>
<gene>
    <name type="primary">hesA2</name>
    <name type="ordered locus">Ava_4256</name>
</gene>
<sequence length="265" mass="29302">MVNLTSTELERYRRQIILPGFGQEAQQRLKSATVLVTGVGGLGGTAALYLAIAGVGRLILVRGGELRLDDMNRQILMSDDWVGKPRVFKAKKRLEDINPDVEVEAIFDYVTPDNVDSLIQSADVALDCAHNFGERDLLNAACVRWRKPMVEAAMDGMDAYLTTIIPGVTPCLSCLFPEKPEWDRRGFGVLGAVSGTLACLTALEAMKLITGFSQPLSSELLTMNLHQLTFAKRRSYRDRNCPVCGTHSQHYPHPQQLSRVLVNSQ</sequence>
<proteinExistence type="evidence at transcript level"/>
<organism>
    <name type="scientific">Trichormus variabilis (strain ATCC 29413 / PCC 7937)</name>
    <name type="common">Anabaena variabilis</name>
    <dbReference type="NCBI Taxonomy" id="240292"/>
    <lineage>
        <taxon>Bacteria</taxon>
        <taxon>Bacillati</taxon>
        <taxon>Cyanobacteriota</taxon>
        <taxon>Cyanophyceae</taxon>
        <taxon>Nostocales</taxon>
        <taxon>Nostocaceae</taxon>
        <taxon>Trichormus</taxon>
    </lineage>
</organism>
<accession>P46048</accession>
<accession>Q3M581</accession>
<keyword id="KW-0535">Nitrogen fixation</keyword>
<comment type="developmental stage">
    <text>Expressed exclusively within vegetative cells.</text>
</comment>
<comment type="similarity">
    <text evidence="1">Belongs to the HesA/MoeB/ThiF family.</text>
</comment>